<comment type="function">
    <text evidence="1">Catalyzes the reversible phosphatidyl group transfer from one phosphatidylglycerol molecule to another to form cardiolipin (CL) (diphosphatidylglycerol) and glycerol.</text>
</comment>
<comment type="catalytic activity">
    <reaction evidence="1">
        <text>2 a 1,2-diacyl-sn-glycero-3-phospho-(1'-sn-glycerol) = a cardiolipin + glycerol</text>
        <dbReference type="Rhea" id="RHEA:31451"/>
        <dbReference type="ChEBI" id="CHEBI:17754"/>
        <dbReference type="ChEBI" id="CHEBI:62237"/>
        <dbReference type="ChEBI" id="CHEBI:64716"/>
    </reaction>
</comment>
<comment type="subcellular location">
    <subcellularLocation>
        <location evidence="1">Cell inner membrane</location>
        <topology evidence="1">Multi-pass membrane protein</topology>
    </subcellularLocation>
</comment>
<comment type="similarity">
    <text evidence="1">Belongs to the phospholipase D family. Cardiolipin synthase subfamily. ClsA sub-subfamily.</text>
</comment>
<name>CLSA_YERPB</name>
<sequence>MTTFYTVISWLSVFGYWLLIAGVTLRILMKRRAVPSAMAWLLIIYILPLVGIIAYLSFGELHLGKRRAERAKAMWPSTARWLSELKECQHIFANSNSEVATPLFQLCERRQGINGVKGNQLQLLTTTDDTLKALVRDIELARHNIEMVFYIWQPGGLVDQVAESLMAAARRGVHCRLLLDSAGSKQFFRSPYPAMMRNAGIEVVEALKVNVFRMFLRRMDLRQHRKIVLIDNYVAYTGSMNMVDPRFFKQDAGVGQWIDMMARMEGPVATTLGIVYACDWEIETGKRILPPPPDANIMPFEEETGHTIQVIASGPGFPEEMIHQALLTAVYAAREQLIMTTPYFVPSDDLLHAICTAAQRGVDVSIIVPRENDSMMVRWASRAFFTELLNAGVKIYQFEGGLLHSKSVLVDGQLSLVGTVNLDMRSLWLNFEITLVIDDDGFGADLAQVQDDYIARSALLDGERWNKRPLWHRVTERLFYFFSPLL</sequence>
<keyword id="KW-0997">Cell inner membrane</keyword>
<keyword id="KW-1003">Cell membrane</keyword>
<keyword id="KW-0444">Lipid biosynthesis</keyword>
<keyword id="KW-0443">Lipid metabolism</keyword>
<keyword id="KW-0472">Membrane</keyword>
<keyword id="KW-0594">Phospholipid biosynthesis</keyword>
<keyword id="KW-1208">Phospholipid metabolism</keyword>
<keyword id="KW-0677">Repeat</keyword>
<keyword id="KW-0808">Transferase</keyword>
<keyword id="KW-0812">Transmembrane</keyword>
<keyword id="KW-1133">Transmembrane helix</keyword>
<reference key="1">
    <citation type="submission" date="2008-04" db="EMBL/GenBank/DDBJ databases">
        <title>Complete sequence of Yersinia pseudotuberculosis PB1/+.</title>
        <authorList>
            <person name="Copeland A."/>
            <person name="Lucas S."/>
            <person name="Lapidus A."/>
            <person name="Glavina del Rio T."/>
            <person name="Dalin E."/>
            <person name="Tice H."/>
            <person name="Bruce D."/>
            <person name="Goodwin L."/>
            <person name="Pitluck S."/>
            <person name="Munk A.C."/>
            <person name="Brettin T."/>
            <person name="Detter J.C."/>
            <person name="Han C."/>
            <person name="Tapia R."/>
            <person name="Schmutz J."/>
            <person name="Larimer F."/>
            <person name="Land M."/>
            <person name="Hauser L."/>
            <person name="Challacombe J.F."/>
            <person name="Green L."/>
            <person name="Lindler L.E."/>
            <person name="Nikolich M.P."/>
            <person name="Richardson P."/>
        </authorList>
    </citation>
    <scope>NUCLEOTIDE SEQUENCE [LARGE SCALE GENOMIC DNA]</scope>
    <source>
        <strain>PB1/+</strain>
    </source>
</reference>
<evidence type="ECO:0000255" key="1">
    <source>
        <dbReference type="HAMAP-Rule" id="MF_00190"/>
    </source>
</evidence>
<protein>
    <recommendedName>
        <fullName evidence="1">Cardiolipin synthase A</fullName>
        <shortName evidence="1">CL synthase</shortName>
        <ecNumber evidence="1">2.7.8.-</ecNumber>
    </recommendedName>
</protein>
<proteinExistence type="inferred from homology"/>
<dbReference type="EC" id="2.7.8.-" evidence="1"/>
<dbReference type="EMBL" id="CP001048">
    <property type="protein sequence ID" value="ACC89141.1"/>
    <property type="molecule type" value="Genomic_DNA"/>
</dbReference>
<dbReference type="RefSeq" id="WP_011192437.1">
    <property type="nucleotide sequence ID" value="NZ_CP009780.1"/>
</dbReference>
<dbReference type="SMR" id="B2K3U5"/>
<dbReference type="KEGG" id="ypb:YPTS_2180"/>
<dbReference type="PATRIC" id="fig|502801.10.peg.1569"/>
<dbReference type="GO" id="GO:0005886">
    <property type="term" value="C:plasma membrane"/>
    <property type="evidence" value="ECO:0007669"/>
    <property type="project" value="UniProtKB-SubCell"/>
</dbReference>
<dbReference type="GO" id="GO:0008808">
    <property type="term" value="F:cardiolipin synthase activity"/>
    <property type="evidence" value="ECO:0007669"/>
    <property type="project" value="InterPro"/>
</dbReference>
<dbReference type="GO" id="GO:0032049">
    <property type="term" value="P:cardiolipin biosynthetic process"/>
    <property type="evidence" value="ECO:0007669"/>
    <property type="project" value="InterPro"/>
</dbReference>
<dbReference type="CDD" id="cd09152">
    <property type="entry name" value="PLDc_EcCLS_like_1"/>
    <property type="match status" value="1"/>
</dbReference>
<dbReference type="CDD" id="cd09158">
    <property type="entry name" value="PLDc_EcCLS_like_2"/>
    <property type="match status" value="1"/>
</dbReference>
<dbReference type="FunFam" id="3.30.870.10:FF:000002">
    <property type="entry name" value="Cardiolipin synthase A"/>
    <property type="match status" value="1"/>
</dbReference>
<dbReference type="FunFam" id="3.30.870.10:FF:000003">
    <property type="entry name" value="Cardiolipin synthase A"/>
    <property type="match status" value="1"/>
</dbReference>
<dbReference type="Gene3D" id="3.30.870.10">
    <property type="entry name" value="Endonuclease Chain A"/>
    <property type="match status" value="2"/>
</dbReference>
<dbReference type="HAMAP" id="MF_00190">
    <property type="entry name" value="Cardiolipin_synth_ClsA"/>
    <property type="match status" value="1"/>
</dbReference>
<dbReference type="InterPro" id="IPR022924">
    <property type="entry name" value="Cardiolipin_synthase"/>
</dbReference>
<dbReference type="InterPro" id="IPR030840">
    <property type="entry name" value="CL_synthase_A"/>
</dbReference>
<dbReference type="InterPro" id="IPR027379">
    <property type="entry name" value="CLS_N"/>
</dbReference>
<dbReference type="InterPro" id="IPR025202">
    <property type="entry name" value="PLD-like_dom"/>
</dbReference>
<dbReference type="InterPro" id="IPR001736">
    <property type="entry name" value="PLipase_D/transphosphatidylase"/>
</dbReference>
<dbReference type="NCBIfam" id="TIGR04265">
    <property type="entry name" value="bac_cardiolipin"/>
    <property type="match status" value="1"/>
</dbReference>
<dbReference type="PANTHER" id="PTHR21248">
    <property type="entry name" value="CARDIOLIPIN SYNTHASE"/>
    <property type="match status" value="1"/>
</dbReference>
<dbReference type="PANTHER" id="PTHR21248:SF22">
    <property type="entry name" value="PHOSPHOLIPASE D"/>
    <property type="match status" value="1"/>
</dbReference>
<dbReference type="Pfam" id="PF13091">
    <property type="entry name" value="PLDc_2"/>
    <property type="match status" value="2"/>
</dbReference>
<dbReference type="Pfam" id="PF13396">
    <property type="entry name" value="PLDc_N"/>
    <property type="match status" value="1"/>
</dbReference>
<dbReference type="SMART" id="SM00155">
    <property type="entry name" value="PLDc"/>
    <property type="match status" value="2"/>
</dbReference>
<dbReference type="SUPFAM" id="SSF56024">
    <property type="entry name" value="Phospholipase D/nuclease"/>
    <property type="match status" value="2"/>
</dbReference>
<dbReference type="PROSITE" id="PS50035">
    <property type="entry name" value="PLD"/>
    <property type="match status" value="2"/>
</dbReference>
<accession>B2K3U5</accession>
<gene>
    <name evidence="1" type="primary">clsA</name>
    <name type="synonym">cls</name>
    <name type="ordered locus">YPTS_2180</name>
</gene>
<feature type="chain" id="PRO_1000098920" description="Cardiolipin synthase A">
    <location>
        <begin position="1"/>
        <end position="486"/>
    </location>
</feature>
<feature type="transmembrane region" description="Helical" evidence="1">
    <location>
        <begin position="3"/>
        <end position="23"/>
    </location>
</feature>
<feature type="transmembrane region" description="Helical" evidence="1">
    <location>
        <begin position="38"/>
        <end position="58"/>
    </location>
</feature>
<feature type="domain" description="PLD phosphodiesterase 1" evidence="1">
    <location>
        <begin position="219"/>
        <end position="246"/>
    </location>
</feature>
<feature type="domain" description="PLD phosphodiesterase 2" evidence="1">
    <location>
        <begin position="399"/>
        <end position="426"/>
    </location>
</feature>
<feature type="active site" evidence="1">
    <location>
        <position position="224"/>
    </location>
</feature>
<feature type="active site" evidence="1">
    <location>
        <position position="226"/>
    </location>
</feature>
<feature type="active site" evidence="1">
    <location>
        <position position="231"/>
    </location>
</feature>
<feature type="active site" evidence="1">
    <location>
        <position position="404"/>
    </location>
</feature>
<feature type="active site" evidence="1">
    <location>
        <position position="406"/>
    </location>
</feature>
<feature type="active site" evidence="1">
    <location>
        <position position="411"/>
    </location>
</feature>
<organism>
    <name type="scientific">Yersinia pseudotuberculosis serotype IB (strain PB1/+)</name>
    <dbReference type="NCBI Taxonomy" id="502801"/>
    <lineage>
        <taxon>Bacteria</taxon>
        <taxon>Pseudomonadati</taxon>
        <taxon>Pseudomonadota</taxon>
        <taxon>Gammaproteobacteria</taxon>
        <taxon>Enterobacterales</taxon>
        <taxon>Yersiniaceae</taxon>
        <taxon>Yersinia</taxon>
    </lineage>
</organism>